<feature type="chain" id="PRO_0000167716" description="Pyridoxine/pyridoxamine 5'-phosphate oxidase">
    <location>
        <begin position="1"/>
        <end position="215"/>
    </location>
</feature>
<feature type="binding site" evidence="1">
    <location>
        <begin position="11"/>
        <end position="14"/>
    </location>
    <ligand>
        <name>substrate</name>
    </ligand>
</feature>
<feature type="binding site" evidence="1">
    <location>
        <begin position="64"/>
        <end position="69"/>
    </location>
    <ligand>
        <name>FMN</name>
        <dbReference type="ChEBI" id="CHEBI:58210"/>
    </ligand>
</feature>
<feature type="binding site" evidence="1">
    <location>
        <position position="69"/>
    </location>
    <ligand>
        <name>substrate</name>
    </ligand>
</feature>
<feature type="binding site" evidence="1">
    <location>
        <begin position="79"/>
        <end position="80"/>
    </location>
    <ligand>
        <name>FMN</name>
        <dbReference type="ChEBI" id="CHEBI:58210"/>
    </ligand>
</feature>
<feature type="binding site" evidence="1">
    <location>
        <position position="86"/>
    </location>
    <ligand>
        <name>FMN</name>
        <dbReference type="ChEBI" id="CHEBI:58210"/>
    </ligand>
</feature>
<feature type="binding site" evidence="1">
    <location>
        <position position="108"/>
    </location>
    <ligand>
        <name>FMN</name>
        <dbReference type="ChEBI" id="CHEBI:58210"/>
    </ligand>
</feature>
<feature type="binding site" evidence="1">
    <location>
        <position position="126"/>
    </location>
    <ligand>
        <name>substrate</name>
    </ligand>
</feature>
<feature type="binding site" evidence="1">
    <location>
        <position position="130"/>
    </location>
    <ligand>
        <name>substrate</name>
    </ligand>
</feature>
<feature type="binding site" evidence="1">
    <location>
        <position position="134"/>
    </location>
    <ligand>
        <name>substrate</name>
    </ligand>
</feature>
<feature type="binding site" evidence="1">
    <location>
        <begin position="143"/>
        <end position="144"/>
    </location>
    <ligand>
        <name>FMN</name>
        <dbReference type="ChEBI" id="CHEBI:58210"/>
    </ligand>
</feature>
<feature type="binding site" evidence="1">
    <location>
        <position position="188"/>
    </location>
    <ligand>
        <name>FMN</name>
        <dbReference type="ChEBI" id="CHEBI:58210"/>
    </ligand>
</feature>
<feature type="binding site" evidence="1">
    <location>
        <begin position="194"/>
        <end position="196"/>
    </location>
    <ligand>
        <name>substrate</name>
    </ligand>
</feature>
<feature type="binding site" evidence="1">
    <location>
        <position position="198"/>
    </location>
    <ligand>
        <name>FMN</name>
        <dbReference type="ChEBI" id="CHEBI:58210"/>
    </ligand>
</feature>
<dbReference type="EC" id="1.4.3.5" evidence="1"/>
<dbReference type="EMBL" id="AE017354">
    <property type="protein sequence ID" value="AAU26632.1"/>
    <property type="molecule type" value="Genomic_DNA"/>
</dbReference>
<dbReference type="RefSeq" id="WP_010946283.1">
    <property type="nucleotide sequence ID" value="NC_002942.5"/>
</dbReference>
<dbReference type="RefSeq" id="YP_094579.1">
    <property type="nucleotide sequence ID" value="NC_002942.5"/>
</dbReference>
<dbReference type="SMR" id="Q5ZY37"/>
<dbReference type="STRING" id="272624.lpg0536"/>
<dbReference type="PaxDb" id="272624-lpg0536"/>
<dbReference type="GeneID" id="57034537"/>
<dbReference type="KEGG" id="lpn:lpg0536"/>
<dbReference type="PATRIC" id="fig|272624.6.peg.560"/>
<dbReference type="eggNOG" id="COG0259">
    <property type="taxonomic scope" value="Bacteria"/>
</dbReference>
<dbReference type="HOGENOM" id="CLU_032263_2_2_6"/>
<dbReference type="OrthoDB" id="9780392at2"/>
<dbReference type="UniPathway" id="UPA01068">
    <property type="reaction ID" value="UER00304"/>
</dbReference>
<dbReference type="UniPathway" id="UPA01068">
    <property type="reaction ID" value="UER00305"/>
</dbReference>
<dbReference type="Proteomes" id="UP000000609">
    <property type="component" value="Chromosome"/>
</dbReference>
<dbReference type="GO" id="GO:0010181">
    <property type="term" value="F:FMN binding"/>
    <property type="evidence" value="ECO:0007669"/>
    <property type="project" value="UniProtKB-UniRule"/>
</dbReference>
<dbReference type="GO" id="GO:0004733">
    <property type="term" value="F:pyridoxamine phosphate oxidase activity"/>
    <property type="evidence" value="ECO:0007669"/>
    <property type="project" value="UniProtKB-UniRule"/>
</dbReference>
<dbReference type="GO" id="GO:0008615">
    <property type="term" value="P:pyridoxine biosynthetic process"/>
    <property type="evidence" value="ECO:0007669"/>
    <property type="project" value="UniProtKB-KW"/>
</dbReference>
<dbReference type="Gene3D" id="2.30.110.10">
    <property type="entry name" value="Electron Transport, Fmn-binding Protein, Chain A"/>
    <property type="match status" value="1"/>
</dbReference>
<dbReference type="HAMAP" id="MF_01629">
    <property type="entry name" value="PdxH"/>
    <property type="match status" value="1"/>
</dbReference>
<dbReference type="InterPro" id="IPR000659">
    <property type="entry name" value="Pyridox_Oxase"/>
</dbReference>
<dbReference type="InterPro" id="IPR019740">
    <property type="entry name" value="Pyridox_Oxase_CS"/>
</dbReference>
<dbReference type="InterPro" id="IPR011576">
    <property type="entry name" value="Pyridox_Oxase_N"/>
</dbReference>
<dbReference type="InterPro" id="IPR019576">
    <property type="entry name" value="Pyridoxamine_oxidase_dimer_C"/>
</dbReference>
<dbReference type="InterPro" id="IPR012349">
    <property type="entry name" value="Split_barrel_FMN-bd"/>
</dbReference>
<dbReference type="NCBIfam" id="TIGR00558">
    <property type="entry name" value="pdxH"/>
    <property type="match status" value="1"/>
</dbReference>
<dbReference type="NCBIfam" id="NF004231">
    <property type="entry name" value="PRK05679.1"/>
    <property type="match status" value="1"/>
</dbReference>
<dbReference type="PANTHER" id="PTHR10851:SF0">
    <property type="entry name" value="PYRIDOXINE-5'-PHOSPHATE OXIDASE"/>
    <property type="match status" value="1"/>
</dbReference>
<dbReference type="PANTHER" id="PTHR10851">
    <property type="entry name" value="PYRIDOXINE-5-PHOSPHATE OXIDASE"/>
    <property type="match status" value="1"/>
</dbReference>
<dbReference type="Pfam" id="PF10590">
    <property type="entry name" value="PNP_phzG_C"/>
    <property type="match status" value="1"/>
</dbReference>
<dbReference type="Pfam" id="PF01243">
    <property type="entry name" value="PNPOx_N"/>
    <property type="match status" value="1"/>
</dbReference>
<dbReference type="PIRSF" id="PIRSF000190">
    <property type="entry name" value="Pyd_amn-ph_oxd"/>
    <property type="match status" value="1"/>
</dbReference>
<dbReference type="SUPFAM" id="SSF50475">
    <property type="entry name" value="FMN-binding split barrel"/>
    <property type="match status" value="1"/>
</dbReference>
<dbReference type="PROSITE" id="PS01064">
    <property type="entry name" value="PYRIDOX_OXIDASE"/>
    <property type="match status" value="1"/>
</dbReference>
<reference key="1">
    <citation type="journal article" date="2004" name="Science">
        <title>The genomic sequence of the accidental pathogen Legionella pneumophila.</title>
        <authorList>
            <person name="Chien M."/>
            <person name="Morozova I."/>
            <person name="Shi S."/>
            <person name="Sheng H."/>
            <person name="Chen J."/>
            <person name="Gomez S.M."/>
            <person name="Asamani G."/>
            <person name="Hill K."/>
            <person name="Nuara J."/>
            <person name="Feder M."/>
            <person name="Rineer J."/>
            <person name="Greenberg J.J."/>
            <person name="Steshenko V."/>
            <person name="Park S.H."/>
            <person name="Zhao B."/>
            <person name="Teplitskaya E."/>
            <person name="Edwards J.R."/>
            <person name="Pampou S."/>
            <person name="Georghiou A."/>
            <person name="Chou I.-C."/>
            <person name="Iannuccilli W."/>
            <person name="Ulz M.E."/>
            <person name="Kim D.H."/>
            <person name="Geringer-Sameth A."/>
            <person name="Goldsberry C."/>
            <person name="Morozov P."/>
            <person name="Fischer S.G."/>
            <person name="Segal G."/>
            <person name="Qu X."/>
            <person name="Rzhetsky A."/>
            <person name="Zhang P."/>
            <person name="Cayanis E."/>
            <person name="De Jong P.J."/>
            <person name="Ju J."/>
            <person name="Kalachikov S."/>
            <person name="Shuman H.A."/>
            <person name="Russo J.J."/>
        </authorList>
    </citation>
    <scope>NUCLEOTIDE SEQUENCE [LARGE SCALE GENOMIC DNA]</scope>
    <source>
        <strain>Philadelphia 1 / ATCC 33152 / DSM 7513</strain>
    </source>
</reference>
<accession>Q5ZY37</accession>
<organism>
    <name type="scientific">Legionella pneumophila subsp. pneumophila (strain Philadelphia 1 / ATCC 33152 / DSM 7513)</name>
    <dbReference type="NCBI Taxonomy" id="272624"/>
    <lineage>
        <taxon>Bacteria</taxon>
        <taxon>Pseudomonadati</taxon>
        <taxon>Pseudomonadota</taxon>
        <taxon>Gammaproteobacteria</taxon>
        <taxon>Legionellales</taxon>
        <taxon>Legionellaceae</taxon>
        <taxon>Legionella</taxon>
    </lineage>
</organism>
<gene>
    <name evidence="1" type="primary">pdxH</name>
    <name type="ordered locus">lpg0536</name>
</gene>
<comment type="function">
    <text evidence="1">Catalyzes the oxidation of either pyridoxine 5'-phosphate (PNP) or pyridoxamine 5'-phosphate (PMP) into pyridoxal 5'-phosphate (PLP).</text>
</comment>
<comment type="catalytic activity">
    <reaction evidence="1">
        <text>pyridoxamine 5'-phosphate + O2 + H2O = pyridoxal 5'-phosphate + H2O2 + NH4(+)</text>
        <dbReference type="Rhea" id="RHEA:15817"/>
        <dbReference type="ChEBI" id="CHEBI:15377"/>
        <dbReference type="ChEBI" id="CHEBI:15379"/>
        <dbReference type="ChEBI" id="CHEBI:16240"/>
        <dbReference type="ChEBI" id="CHEBI:28938"/>
        <dbReference type="ChEBI" id="CHEBI:58451"/>
        <dbReference type="ChEBI" id="CHEBI:597326"/>
        <dbReference type="EC" id="1.4.3.5"/>
    </reaction>
</comment>
<comment type="catalytic activity">
    <reaction evidence="1">
        <text>pyridoxine 5'-phosphate + O2 = pyridoxal 5'-phosphate + H2O2</text>
        <dbReference type="Rhea" id="RHEA:15149"/>
        <dbReference type="ChEBI" id="CHEBI:15379"/>
        <dbReference type="ChEBI" id="CHEBI:16240"/>
        <dbReference type="ChEBI" id="CHEBI:58589"/>
        <dbReference type="ChEBI" id="CHEBI:597326"/>
        <dbReference type="EC" id="1.4.3.5"/>
    </reaction>
</comment>
<comment type="cofactor">
    <cofactor evidence="1">
        <name>FMN</name>
        <dbReference type="ChEBI" id="CHEBI:58210"/>
    </cofactor>
    <text evidence="1">Binds 1 FMN per subunit.</text>
</comment>
<comment type="pathway">
    <text evidence="1">Cofactor metabolism; pyridoxal 5'-phosphate salvage; pyridoxal 5'-phosphate from pyridoxamine 5'-phosphate: step 1/1.</text>
</comment>
<comment type="pathway">
    <text evidence="1">Cofactor metabolism; pyridoxal 5'-phosphate salvage; pyridoxal 5'-phosphate from pyridoxine 5'-phosphate: step 1/1.</text>
</comment>
<comment type="subunit">
    <text evidence="1">Homodimer.</text>
</comment>
<comment type="similarity">
    <text evidence="1">Belongs to the pyridoxamine 5'-phosphate oxidase family.</text>
</comment>
<proteinExistence type="inferred from homology"/>
<protein>
    <recommendedName>
        <fullName evidence="1">Pyridoxine/pyridoxamine 5'-phosphate oxidase</fullName>
        <ecNumber evidence="1">1.4.3.5</ecNumber>
    </recommendedName>
    <alternativeName>
        <fullName evidence="1">PNP/PMP oxidase</fullName>
        <shortName evidence="1">PNPOx</shortName>
    </alternativeName>
    <alternativeName>
        <fullName evidence="1">Pyridoxal 5'-phosphate synthase</fullName>
    </alternativeName>
</protein>
<evidence type="ECO:0000255" key="1">
    <source>
        <dbReference type="HAMAP-Rule" id="MF_01629"/>
    </source>
</evidence>
<sequence length="215" mass="25263">MSKFRSLADIRRDYGELQLSEESAENDPISQFKLWFDDVLLNEKNDPTAMVLSTVDEKGYPDSRVVLLKGLENGNFIFYTNYQSAKAMQIQKNPYAALNFYWPQMARQVRVRGRVKKISSEQSDAYFSSRPLKSQFSAIVSPQSQEILDRISLEDALNQLIEEYGQKPVVRPENWGGYMIIPDEIEFWQGRDNRLHDRIHYYRHGHEWTHRRLAP</sequence>
<keyword id="KW-0285">Flavoprotein</keyword>
<keyword id="KW-0288">FMN</keyword>
<keyword id="KW-0560">Oxidoreductase</keyword>
<keyword id="KW-0664">Pyridoxine biosynthesis</keyword>
<keyword id="KW-1185">Reference proteome</keyword>
<name>PDXH_LEGPH</name>